<keyword id="KW-0028">Amino-acid biosynthesis</keyword>
<keyword id="KW-0067">ATP-binding</keyword>
<keyword id="KW-0963">Cytoplasm</keyword>
<keyword id="KW-0418">Kinase</keyword>
<keyword id="KW-0547">Nucleotide-binding</keyword>
<keyword id="KW-0641">Proline biosynthesis</keyword>
<keyword id="KW-0808">Transferase</keyword>
<sequence>MMKRQFEDVTRIVIKIGTSSLVLPTGKINLEKIDQLAFVISSLMNKGKEVILVSSGAMGFGLDILKMEKRPTNLAKQQAVSSVGQVAMMSLYSQIFAHYQTNVSQILLTRDVVVFPESLANVTNAFESLISLGIVPIVNENDAVSVDEMDHATKFGDNDRLSAVVAGITKADLLIMLSDIDGLFDKNPTIYEDAQLRSHVAVITQEIIASAGGAGSKFGTGGMLSKIQSAQMVFENKGQMVLMNGANPRDILRVLEGQPLGTWFKQIEEVRHD</sequence>
<dbReference type="EC" id="2.7.2.11" evidence="1"/>
<dbReference type="EMBL" id="CP000262">
    <property type="protein sequence ID" value="ABF38431.1"/>
    <property type="status" value="ALT_INIT"/>
    <property type="molecule type" value="Genomic_DNA"/>
</dbReference>
<dbReference type="SMR" id="Q1J5F5"/>
<dbReference type="KEGG" id="spi:MGAS10750_Spy1481"/>
<dbReference type="HOGENOM" id="CLU_025400_0_2_9"/>
<dbReference type="UniPathway" id="UPA00098">
    <property type="reaction ID" value="UER00359"/>
</dbReference>
<dbReference type="Proteomes" id="UP000002434">
    <property type="component" value="Chromosome"/>
</dbReference>
<dbReference type="GO" id="GO:0005829">
    <property type="term" value="C:cytosol"/>
    <property type="evidence" value="ECO:0007669"/>
    <property type="project" value="TreeGrafter"/>
</dbReference>
<dbReference type="GO" id="GO:0005524">
    <property type="term" value="F:ATP binding"/>
    <property type="evidence" value="ECO:0007669"/>
    <property type="project" value="UniProtKB-KW"/>
</dbReference>
<dbReference type="GO" id="GO:0004349">
    <property type="term" value="F:glutamate 5-kinase activity"/>
    <property type="evidence" value="ECO:0007669"/>
    <property type="project" value="UniProtKB-UniRule"/>
</dbReference>
<dbReference type="GO" id="GO:0055129">
    <property type="term" value="P:L-proline biosynthetic process"/>
    <property type="evidence" value="ECO:0007669"/>
    <property type="project" value="UniProtKB-UniRule"/>
</dbReference>
<dbReference type="CDD" id="cd04242">
    <property type="entry name" value="AAK_G5K_ProB"/>
    <property type="match status" value="1"/>
</dbReference>
<dbReference type="FunFam" id="3.40.1160.10:FF:000006">
    <property type="entry name" value="Glutamate 5-kinase"/>
    <property type="match status" value="1"/>
</dbReference>
<dbReference type="Gene3D" id="3.40.1160.10">
    <property type="entry name" value="Acetylglutamate kinase-like"/>
    <property type="match status" value="1"/>
</dbReference>
<dbReference type="HAMAP" id="MF_00456">
    <property type="entry name" value="ProB"/>
    <property type="match status" value="1"/>
</dbReference>
<dbReference type="InterPro" id="IPR036393">
    <property type="entry name" value="AceGlu_kinase-like_sf"/>
</dbReference>
<dbReference type="InterPro" id="IPR001048">
    <property type="entry name" value="Asp/Glu/Uridylate_kinase"/>
</dbReference>
<dbReference type="InterPro" id="IPR041739">
    <property type="entry name" value="G5K_ProB"/>
</dbReference>
<dbReference type="InterPro" id="IPR001057">
    <property type="entry name" value="Glu/AcGlu_kinase"/>
</dbReference>
<dbReference type="InterPro" id="IPR011529">
    <property type="entry name" value="Glu_5kinase"/>
</dbReference>
<dbReference type="InterPro" id="IPR005715">
    <property type="entry name" value="Glu_5kinase/COase_Synthase"/>
</dbReference>
<dbReference type="InterPro" id="IPR019797">
    <property type="entry name" value="Glutamate_5-kinase_CS"/>
</dbReference>
<dbReference type="NCBIfam" id="TIGR01027">
    <property type="entry name" value="proB"/>
    <property type="match status" value="1"/>
</dbReference>
<dbReference type="PANTHER" id="PTHR43654">
    <property type="entry name" value="GLUTAMATE 5-KINASE"/>
    <property type="match status" value="1"/>
</dbReference>
<dbReference type="PANTHER" id="PTHR43654:SF1">
    <property type="entry name" value="ISOPENTENYL PHOSPHATE KINASE"/>
    <property type="match status" value="1"/>
</dbReference>
<dbReference type="Pfam" id="PF00696">
    <property type="entry name" value="AA_kinase"/>
    <property type="match status" value="1"/>
</dbReference>
<dbReference type="PIRSF" id="PIRSF000729">
    <property type="entry name" value="GK"/>
    <property type="match status" value="1"/>
</dbReference>
<dbReference type="PRINTS" id="PR00474">
    <property type="entry name" value="GLU5KINASE"/>
</dbReference>
<dbReference type="SUPFAM" id="SSF53633">
    <property type="entry name" value="Carbamate kinase-like"/>
    <property type="match status" value="1"/>
</dbReference>
<dbReference type="PROSITE" id="PS00902">
    <property type="entry name" value="GLUTAMATE_5_KINASE"/>
    <property type="match status" value="1"/>
</dbReference>
<name>PROB_STRPF</name>
<accession>Q1J5F5</accession>
<protein>
    <recommendedName>
        <fullName evidence="1">Glutamate 5-kinase</fullName>
        <ecNumber evidence="1">2.7.2.11</ecNumber>
    </recommendedName>
    <alternativeName>
        <fullName evidence="1">Gamma-glutamyl kinase</fullName>
        <shortName evidence="1">GK</shortName>
    </alternativeName>
</protein>
<feature type="chain" id="PRO_0000253007" description="Glutamate 5-kinase">
    <location>
        <begin position="1"/>
        <end position="273"/>
    </location>
</feature>
<feature type="binding site" evidence="1">
    <location>
        <position position="15"/>
    </location>
    <ligand>
        <name>ATP</name>
        <dbReference type="ChEBI" id="CHEBI:30616"/>
    </ligand>
</feature>
<feature type="binding site" evidence="1">
    <location>
        <position position="55"/>
    </location>
    <ligand>
        <name>substrate</name>
    </ligand>
</feature>
<feature type="binding site" evidence="1">
    <location>
        <position position="142"/>
    </location>
    <ligand>
        <name>substrate</name>
    </ligand>
</feature>
<feature type="binding site" evidence="1">
    <location>
        <position position="158"/>
    </location>
    <ligand>
        <name>substrate</name>
    </ligand>
</feature>
<feature type="binding site" evidence="1">
    <location>
        <begin position="178"/>
        <end position="179"/>
    </location>
    <ligand>
        <name>ATP</name>
        <dbReference type="ChEBI" id="CHEBI:30616"/>
    </ligand>
</feature>
<feature type="binding site" evidence="1">
    <location>
        <begin position="220"/>
        <end position="226"/>
    </location>
    <ligand>
        <name>ATP</name>
        <dbReference type="ChEBI" id="CHEBI:30616"/>
    </ligand>
</feature>
<reference key="1">
    <citation type="journal article" date="2006" name="Proc. Natl. Acad. Sci. U.S.A.">
        <title>Molecular genetic anatomy of inter- and intraserotype variation in the human bacterial pathogen group A Streptococcus.</title>
        <authorList>
            <person name="Beres S.B."/>
            <person name="Richter E.W."/>
            <person name="Nagiec M.J."/>
            <person name="Sumby P."/>
            <person name="Porcella S.F."/>
            <person name="DeLeo F.R."/>
            <person name="Musser J.M."/>
        </authorList>
    </citation>
    <scope>NUCLEOTIDE SEQUENCE [LARGE SCALE GENOMIC DNA]</scope>
    <source>
        <strain>MGAS10750</strain>
    </source>
</reference>
<gene>
    <name evidence="1" type="primary">proB</name>
    <name type="ordered locus">MGAS10750_Spy1481</name>
</gene>
<evidence type="ECO:0000255" key="1">
    <source>
        <dbReference type="HAMAP-Rule" id="MF_00456"/>
    </source>
</evidence>
<evidence type="ECO:0000305" key="2"/>
<organism>
    <name type="scientific">Streptococcus pyogenes serotype M4 (strain MGAS10750)</name>
    <dbReference type="NCBI Taxonomy" id="370554"/>
    <lineage>
        <taxon>Bacteria</taxon>
        <taxon>Bacillati</taxon>
        <taxon>Bacillota</taxon>
        <taxon>Bacilli</taxon>
        <taxon>Lactobacillales</taxon>
        <taxon>Streptococcaceae</taxon>
        <taxon>Streptococcus</taxon>
    </lineage>
</organism>
<proteinExistence type="inferred from homology"/>
<comment type="function">
    <text evidence="1">Catalyzes the transfer of a phosphate group to glutamate to form L-glutamate 5-phosphate.</text>
</comment>
<comment type="catalytic activity">
    <reaction evidence="1">
        <text>L-glutamate + ATP = L-glutamyl 5-phosphate + ADP</text>
        <dbReference type="Rhea" id="RHEA:14877"/>
        <dbReference type="ChEBI" id="CHEBI:29985"/>
        <dbReference type="ChEBI" id="CHEBI:30616"/>
        <dbReference type="ChEBI" id="CHEBI:58274"/>
        <dbReference type="ChEBI" id="CHEBI:456216"/>
        <dbReference type="EC" id="2.7.2.11"/>
    </reaction>
</comment>
<comment type="pathway">
    <text evidence="1">Amino-acid biosynthesis; L-proline biosynthesis; L-glutamate 5-semialdehyde from L-glutamate: step 1/2.</text>
</comment>
<comment type="subcellular location">
    <subcellularLocation>
        <location evidence="1">Cytoplasm</location>
    </subcellularLocation>
</comment>
<comment type="similarity">
    <text evidence="1">Belongs to the glutamate 5-kinase family.</text>
</comment>
<comment type="sequence caution" evidence="2">
    <conflict type="erroneous initiation">
        <sequence resource="EMBL-CDS" id="ABF38431"/>
    </conflict>
</comment>